<gene>
    <name evidence="1" type="primary">truA</name>
    <name type="ordered locus">Pcar_1901</name>
</gene>
<name>TRUA_SYNC1</name>
<feature type="chain" id="PRO_1000017131" description="tRNA pseudouridine synthase A">
    <location>
        <begin position="1"/>
        <end position="252"/>
    </location>
</feature>
<feature type="active site" description="Nucleophile" evidence="1">
    <location>
        <position position="52"/>
    </location>
</feature>
<feature type="binding site" evidence="1">
    <location>
        <position position="110"/>
    </location>
    <ligand>
        <name>substrate</name>
    </ligand>
</feature>
<protein>
    <recommendedName>
        <fullName evidence="1">tRNA pseudouridine synthase A</fullName>
        <ecNumber evidence="1">5.4.99.12</ecNumber>
    </recommendedName>
    <alternativeName>
        <fullName evidence="1">tRNA pseudouridine(38-40) synthase</fullName>
    </alternativeName>
    <alternativeName>
        <fullName evidence="1">tRNA pseudouridylate synthase I</fullName>
    </alternativeName>
    <alternativeName>
        <fullName evidence="1">tRNA-uridine isomerase I</fullName>
    </alternativeName>
</protein>
<evidence type="ECO:0000255" key="1">
    <source>
        <dbReference type="HAMAP-Rule" id="MF_00171"/>
    </source>
</evidence>
<dbReference type="EC" id="5.4.99.12" evidence="1"/>
<dbReference type="EMBL" id="CP000142">
    <property type="protein sequence ID" value="ABA89142.1"/>
    <property type="molecule type" value="Genomic_DNA"/>
</dbReference>
<dbReference type="RefSeq" id="WP_011341646.1">
    <property type="nucleotide sequence ID" value="NC_007498.2"/>
</dbReference>
<dbReference type="SMR" id="Q3A3B5"/>
<dbReference type="STRING" id="338963.Pcar_1901"/>
<dbReference type="KEGG" id="pca:Pcar_1901"/>
<dbReference type="eggNOG" id="COG0101">
    <property type="taxonomic scope" value="Bacteria"/>
</dbReference>
<dbReference type="HOGENOM" id="CLU_014673_0_1_7"/>
<dbReference type="OrthoDB" id="9811823at2"/>
<dbReference type="Proteomes" id="UP000002534">
    <property type="component" value="Chromosome"/>
</dbReference>
<dbReference type="GO" id="GO:0003723">
    <property type="term" value="F:RNA binding"/>
    <property type="evidence" value="ECO:0007669"/>
    <property type="project" value="InterPro"/>
</dbReference>
<dbReference type="GO" id="GO:0160147">
    <property type="term" value="F:tRNA pseudouridine(38-40) synthase activity"/>
    <property type="evidence" value="ECO:0007669"/>
    <property type="project" value="UniProtKB-EC"/>
</dbReference>
<dbReference type="GO" id="GO:0031119">
    <property type="term" value="P:tRNA pseudouridine synthesis"/>
    <property type="evidence" value="ECO:0007669"/>
    <property type="project" value="UniProtKB-UniRule"/>
</dbReference>
<dbReference type="CDD" id="cd02570">
    <property type="entry name" value="PseudoU_synth_EcTruA"/>
    <property type="match status" value="1"/>
</dbReference>
<dbReference type="FunFam" id="3.30.70.580:FF:000001">
    <property type="entry name" value="tRNA pseudouridine synthase A"/>
    <property type="match status" value="1"/>
</dbReference>
<dbReference type="Gene3D" id="3.30.70.660">
    <property type="entry name" value="Pseudouridine synthase I, catalytic domain, C-terminal subdomain"/>
    <property type="match status" value="1"/>
</dbReference>
<dbReference type="Gene3D" id="3.30.70.580">
    <property type="entry name" value="Pseudouridine synthase I, catalytic domain, N-terminal subdomain"/>
    <property type="match status" value="1"/>
</dbReference>
<dbReference type="HAMAP" id="MF_00171">
    <property type="entry name" value="TruA"/>
    <property type="match status" value="1"/>
</dbReference>
<dbReference type="InterPro" id="IPR020103">
    <property type="entry name" value="PsdUridine_synth_cat_dom_sf"/>
</dbReference>
<dbReference type="InterPro" id="IPR001406">
    <property type="entry name" value="PsdUridine_synth_TruA"/>
</dbReference>
<dbReference type="InterPro" id="IPR020097">
    <property type="entry name" value="PsdUridine_synth_TruA_a/b_dom"/>
</dbReference>
<dbReference type="InterPro" id="IPR020095">
    <property type="entry name" value="PsdUridine_synth_TruA_C"/>
</dbReference>
<dbReference type="InterPro" id="IPR020094">
    <property type="entry name" value="TruA/RsuA/RluB/E/F_N"/>
</dbReference>
<dbReference type="NCBIfam" id="TIGR00071">
    <property type="entry name" value="hisT_truA"/>
    <property type="match status" value="1"/>
</dbReference>
<dbReference type="PANTHER" id="PTHR11142">
    <property type="entry name" value="PSEUDOURIDYLATE SYNTHASE"/>
    <property type="match status" value="1"/>
</dbReference>
<dbReference type="PANTHER" id="PTHR11142:SF0">
    <property type="entry name" value="TRNA PSEUDOURIDINE SYNTHASE-LIKE 1"/>
    <property type="match status" value="1"/>
</dbReference>
<dbReference type="Pfam" id="PF01416">
    <property type="entry name" value="PseudoU_synth_1"/>
    <property type="match status" value="2"/>
</dbReference>
<dbReference type="PIRSF" id="PIRSF001430">
    <property type="entry name" value="tRNA_psdUrid_synth"/>
    <property type="match status" value="1"/>
</dbReference>
<dbReference type="SUPFAM" id="SSF55120">
    <property type="entry name" value="Pseudouridine synthase"/>
    <property type="match status" value="1"/>
</dbReference>
<reference key="1">
    <citation type="submission" date="2005-10" db="EMBL/GenBank/DDBJ databases">
        <title>Complete sequence of Pelobacter carbinolicus DSM 2380.</title>
        <authorList>
            <person name="Copeland A."/>
            <person name="Lucas S."/>
            <person name="Lapidus A."/>
            <person name="Barry K."/>
            <person name="Detter J.C."/>
            <person name="Glavina T."/>
            <person name="Hammon N."/>
            <person name="Israni S."/>
            <person name="Pitluck S."/>
            <person name="Chertkov O."/>
            <person name="Schmutz J."/>
            <person name="Larimer F."/>
            <person name="Land M."/>
            <person name="Kyrpides N."/>
            <person name="Ivanova N."/>
            <person name="Richardson P."/>
        </authorList>
    </citation>
    <scope>NUCLEOTIDE SEQUENCE [LARGE SCALE GENOMIC DNA]</scope>
    <source>
        <strain>DSM 2380 / NBRC 103641 / GraBd1</strain>
    </source>
</reference>
<proteinExistence type="inferred from homology"/>
<comment type="function">
    <text evidence="1">Formation of pseudouridine at positions 38, 39 and 40 in the anticodon stem and loop of transfer RNAs.</text>
</comment>
<comment type="catalytic activity">
    <reaction evidence="1">
        <text>uridine(38/39/40) in tRNA = pseudouridine(38/39/40) in tRNA</text>
        <dbReference type="Rhea" id="RHEA:22376"/>
        <dbReference type="Rhea" id="RHEA-COMP:10085"/>
        <dbReference type="Rhea" id="RHEA-COMP:10087"/>
        <dbReference type="ChEBI" id="CHEBI:65314"/>
        <dbReference type="ChEBI" id="CHEBI:65315"/>
        <dbReference type="EC" id="5.4.99.12"/>
    </reaction>
</comment>
<comment type="subunit">
    <text evidence="1">Homodimer.</text>
</comment>
<comment type="similarity">
    <text evidence="1">Belongs to the tRNA pseudouridine synthase TruA family.</text>
</comment>
<accession>Q3A3B5</accession>
<keyword id="KW-0413">Isomerase</keyword>
<keyword id="KW-1185">Reference proteome</keyword>
<keyword id="KW-0819">tRNA processing</keyword>
<organism>
    <name type="scientific">Syntrophotalea carbinolica (strain DSM 2380 / NBRC 103641 / GraBd1)</name>
    <name type="common">Pelobacter carbinolicus</name>
    <dbReference type="NCBI Taxonomy" id="338963"/>
    <lineage>
        <taxon>Bacteria</taxon>
        <taxon>Pseudomonadati</taxon>
        <taxon>Thermodesulfobacteriota</taxon>
        <taxon>Desulfuromonadia</taxon>
        <taxon>Desulfuromonadales</taxon>
        <taxon>Syntrophotaleaceae</taxon>
        <taxon>Syntrophotalea</taxon>
    </lineage>
</organism>
<sequence length="252" mass="27608">MSVVRLIIEYDGTPYVGWQRQPNGLSVQQVVEEALAKVCGGPHSLVSSGRTDAGVHARGMVAHFVTPQPLPMAAYREGVNRFLPAQIAVRDAALMPDDFHARYSAVGKWYRYSIYRSPVRSPLACRFSWHVRTVLDLQAMRQAARLLVGRHDFAAFRASGCAARTTVREVFSVDIVDAEEWVYVDVRGSGFLRNMVRIMVGTLVEVGRGARPPEEVGAMLAGGCRKQSGITAPAQGLCLMEVAYAPQDCVEG</sequence>